<organism>
    <name type="scientific">Pseudomonas putida (strain ATCC 47054 / DSM 6125 / CFBP 8728 / NCIMB 11950 / KT2440)</name>
    <dbReference type="NCBI Taxonomy" id="160488"/>
    <lineage>
        <taxon>Bacteria</taxon>
        <taxon>Pseudomonadati</taxon>
        <taxon>Pseudomonadota</taxon>
        <taxon>Gammaproteobacteria</taxon>
        <taxon>Pseudomonadales</taxon>
        <taxon>Pseudomonadaceae</taxon>
        <taxon>Pseudomonas</taxon>
    </lineage>
</organism>
<accession>Q88DK3</accession>
<reference key="1">
    <citation type="journal article" date="2002" name="Environ. Microbiol.">
        <title>Complete genome sequence and comparative analysis of the metabolically versatile Pseudomonas putida KT2440.</title>
        <authorList>
            <person name="Nelson K.E."/>
            <person name="Weinel C."/>
            <person name="Paulsen I.T."/>
            <person name="Dodson R.J."/>
            <person name="Hilbert H."/>
            <person name="Martins dos Santos V.A.P."/>
            <person name="Fouts D.E."/>
            <person name="Gill S.R."/>
            <person name="Pop M."/>
            <person name="Holmes M."/>
            <person name="Brinkac L.M."/>
            <person name="Beanan M.J."/>
            <person name="DeBoy R.T."/>
            <person name="Daugherty S.C."/>
            <person name="Kolonay J.F."/>
            <person name="Madupu R."/>
            <person name="Nelson W.C."/>
            <person name="White O."/>
            <person name="Peterson J.D."/>
            <person name="Khouri H.M."/>
            <person name="Hance I."/>
            <person name="Chris Lee P."/>
            <person name="Holtzapple E.K."/>
            <person name="Scanlan D."/>
            <person name="Tran K."/>
            <person name="Moazzez A."/>
            <person name="Utterback T.R."/>
            <person name="Rizzo M."/>
            <person name="Lee K."/>
            <person name="Kosack D."/>
            <person name="Moestl D."/>
            <person name="Wedler H."/>
            <person name="Lauber J."/>
            <person name="Stjepandic D."/>
            <person name="Hoheisel J."/>
            <person name="Straetz M."/>
            <person name="Heim S."/>
            <person name="Kiewitz C."/>
            <person name="Eisen J.A."/>
            <person name="Timmis K.N."/>
            <person name="Duesterhoeft A."/>
            <person name="Tuemmler B."/>
            <person name="Fraser C.M."/>
        </authorList>
    </citation>
    <scope>NUCLEOTIDE SEQUENCE [LARGE SCALE GENOMIC DNA]</scope>
    <source>
        <strain>ATCC 47054 / DSM 6125 / CFBP 8728 / NCIMB 11950 / KT2440</strain>
    </source>
</reference>
<protein>
    <recommendedName>
        <fullName evidence="1">Bifunctional purine biosynthesis protein PurH</fullName>
    </recommendedName>
    <domain>
        <recommendedName>
            <fullName evidence="1">Phosphoribosylaminoimidazolecarboxamide formyltransferase</fullName>
            <ecNumber evidence="1">2.1.2.3</ecNumber>
        </recommendedName>
        <alternativeName>
            <fullName evidence="1">AICAR transformylase</fullName>
        </alternativeName>
    </domain>
    <domain>
        <recommendedName>
            <fullName evidence="1">IMP cyclohydrolase</fullName>
            <ecNumber evidence="1">3.5.4.10</ecNumber>
        </recommendedName>
        <alternativeName>
            <fullName evidence="1">ATIC</fullName>
        </alternativeName>
        <alternativeName>
            <fullName evidence="1">IMP synthase</fullName>
        </alternativeName>
        <alternativeName>
            <fullName evidence="1">Inosinicase</fullName>
        </alternativeName>
    </domain>
</protein>
<keyword id="KW-0378">Hydrolase</keyword>
<keyword id="KW-0511">Multifunctional enzyme</keyword>
<keyword id="KW-0658">Purine biosynthesis</keyword>
<keyword id="KW-1185">Reference proteome</keyword>
<keyword id="KW-0808">Transferase</keyword>
<name>PUR9_PSEPK</name>
<comment type="catalytic activity">
    <reaction evidence="1">
        <text>(6R)-10-formyltetrahydrofolate + 5-amino-1-(5-phospho-beta-D-ribosyl)imidazole-4-carboxamide = 5-formamido-1-(5-phospho-D-ribosyl)imidazole-4-carboxamide + (6S)-5,6,7,8-tetrahydrofolate</text>
        <dbReference type="Rhea" id="RHEA:22192"/>
        <dbReference type="ChEBI" id="CHEBI:57453"/>
        <dbReference type="ChEBI" id="CHEBI:58467"/>
        <dbReference type="ChEBI" id="CHEBI:58475"/>
        <dbReference type="ChEBI" id="CHEBI:195366"/>
        <dbReference type="EC" id="2.1.2.3"/>
    </reaction>
</comment>
<comment type="catalytic activity">
    <reaction evidence="1">
        <text>IMP + H2O = 5-formamido-1-(5-phospho-D-ribosyl)imidazole-4-carboxamide</text>
        <dbReference type="Rhea" id="RHEA:18445"/>
        <dbReference type="ChEBI" id="CHEBI:15377"/>
        <dbReference type="ChEBI" id="CHEBI:58053"/>
        <dbReference type="ChEBI" id="CHEBI:58467"/>
        <dbReference type="EC" id="3.5.4.10"/>
    </reaction>
</comment>
<comment type="pathway">
    <text evidence="1">Purine metabolism; IMP biosynthesis via de novo pathway; 5-formamido-1-(5-phospho-D-ribosyl)imidazole-4-carboxamide from 5-amino-1-(5-phospho-D-ribosyl)imidazole-4-carboxamide (10-formyl THF route): step 1/1.</text>
</comment>
<comment type="pathway">
    <text evidence="1">Purine metabolism; IMP biosynthesis via de novo pathway; IMP from 5-formamido-1-(5-phospho-D-ribosyl)imidazole-4-carboxamide: step 1/1.</text>
</comment>
<comment type="domain">
    <text evidence="1">The IMP cyclohydrolase activity resides in the N-terminal region.</text>
</comment>
<comment type="similarity">
    <text evidence="1">Belongs to the PurH family.</text>
</comment>
<proteinExistence type="inferred from homology"/>
<evidence type="ECO:0000255" key="1">
    <source>
        <dbReference type="HAMAP-Rule" id="MF_00139"/>
    </source>
</evidence>
<evidence type="ECO:0000255" key="2">
    <source>
        <dbReference type="PROSITE-ProRule" id="PRU01202"/>
    </source>
</evidence>
<sequence>MTDQTTRLPVRRALISVSDKTGILEFARELQQLGVEILSTGGTYKLLKDNGVNAVEVADYTGFAEMMDGRVKTLHPKIHGGILGRRGTDDAIMNEHGIKPIDLVAVNLYPFEATISKPGCDLPTAIENIDIGGPTMVRSAAKNHKDVAIVVNASDYAGIVEGLKAGGLTYAQRFDLMLKAFEHTAAYDGMIANYMGTIDQAKDTLSTEARSEFPRTFNSQFVKAQEMRYGENPHQSAAFYVEAKKGEASISTAVQLQGKELSFNNVADTDAALECVKSFVKPACVIVKHANPCGVAVVPEDEGGIRKAYDLAYATDTESAFGGIIAFNRELDGETAKAIVDRQFVEVIIAPKISQAARDVVAAKQNVRLLECGEWPAERAAGWDFKRVNGGLLVQSRDIGMITADDLKIVTKRAPTEQEIHDLVFAWKVAKFVKSNAIVYAKQRQTIGVGAGQMSRVNSARIAAIKAEHAGLQVQGAVMASDAFFPFRDGIDNAAKVGISAVIQPGGSMRDAEVIAAADEAGIAMVFTGMRHFRH</sequence>
<feature type="chain" id="PRO_0000192113" description="Bifunctional purine biosynthesis protein PurH">
    <location>
        <begin position="1"/>
        <end position="535"/>
    </location>
</feature>
<feature type="domain" description="MGS-like" evidence="2">
    <location>
        <begin position="6"/>
        <end position="151"/>
    </location>
</feature>
<gene>
    <name evidence="1" type="primary">purH</name>
    <name type="ordered locus">PP_4822</name>
</gene>
<dbReference type="EC" id="2.1.2.3" evidence="1"/>
<dbReference type="EC" id="3.5.4.10" evidence="1"/>
<dbReference type="EMBL" id="AE015451">
    <property type="protein sequence ID" value="AAN70391.1"/>
    <property type="molecule type" value="Genomic_DNA"/>
</dbReference>
<dbReference type="RefSeq" id="NP_746927.1">
    <property type="nucleotide sequence ID" value="NC_002947.4"/>
</dbReference>
<dbReference type="RefSeq" id="WP_003249687.1">
    <property type="nucleotide sequence ID" value="NZ_CP169744.1"/>
</dbReference>
<dbReference type="SMR" id="Q88DK3"/>
<dbReference type="STRING" id="160488.PP_4822"/>
<dbReference type="PaxDb" id="160488-PP_4822"/>
<dbReference type="GeneID" id="83682548"/>
<dbReference type="KEGG" id="ppu:PP_4822"/>
<dbReference type="PATRIC" id="fig|160488.4.peg.5145"/>
<dbReference type="eggNOG" id="COG0138">
    <property type="taxonomic scope" value="Bacteria"/>
</dbReference>
<dbReference type="HOGENOM" id="CLU_016316_5_2_6"/>
<dbReference type="OrthoDB" id="9802065at2"/>
<dbReference type="PhylomeDB" id="Q88DK3"/>
<dbReference type="BioCyc" id="PPUT160488:G1G01-5159-MONOMER"/>
<dbReference type="UniPathway" id="UPA00074">
    <property type="reaction ID" value="UER00133"/>
</dbReference>
<dbReference type="UniPathway" id="UPA00074">
    <property type="reaction ID" value="UER00135"/>
</dbReference>
<dbReference type="Proteomes" id="UP000000556">
    <property type="component" value="Chromosome"/>
</dbReference>
<dbReference type="GO" id="GO:0005829">
    <property type="term" value="C:cytosol"/>
    <property type="evidence" value="ECO:0007669"/>
    <property type="project" value="TreeGrafter"/>
</dbReference>
<dbReference type="GO" id="GO:0003937">
    <property type="term" value="F:IMP cyclohydrolase activity"/>
    <property type="evidence" value="ECO:0007669"/>
    <property type="project" value="UniProtKB-UniRule"/>
</dbReference>
<dbReference type="GO" id="GO:0004643">
    <property type="term" value="F:phosphoribosylaminoimidazolecarboxamide formyltransferase activity"/>
    <property type="evidence" value="ECO:0007669"/>
    <property type="project" value="UniProtKB-UniRule"/>
</dbReference>
<dbReference type="GO" id="GO:0006189">
    <property type="term" value="P:'de novo' IMP biosynthetic process"/>
    <property type="evidence" value="ECO:0007669"/>
    <property type="project" value="UniProtKB-UniRule"/>
</dbReference>
<dbReference type="CDD" id="cd01421">
    <property type="entry name" value="IMPCH"/>
    <property type="match status" value="1"/>
</dbReference>
<dbReference type="FunFam" id="3.40.140.20:FF:000001">
    <property type="entry name" value="Bifunctional purine biosynthesis protein PurH"/>
    <property type="match status" value="1"/>
</dbReference>
<dbReference type="FunFam" id="3.40.140.20:FF:000002">
    <property type="entry name" value="Bifunctional purine biosynthesis protein PurH"/>
    <property type="match status" value="1"/>
</dbReference>
<dbReference type="FunFam" id="3.40.50.1380:FF:000001">
    <property type="entry name" value="Bifunctional purine biosynthesis protein PurH"/>
    <property type="match status" value="1"/>
</dbReference>
<dbReference type="Gene3D" id="3.40.140.20">
    <property type="match status" value="2"/>
</dbReference>
<dbReference type="Gene3D" id="3.40.50.1380">
    <property type="entry name" value="Methylglyoxal synthase-like domain"/>
    <property type="match status" value="1"/>
</dbReference>
<dbReference type="HAMAP" id="MF_00139">
    <property type="entry name" value="PurH"/>
    <property type="match status" value="1"/>
</dbReference>
<dbReference type="InterPro" id="IPR024051">
    <property type="entry name" value="AICAR_Tfase_dup_dom_sf"/>
</dbReference>
<dbReference type="InterPro" id="IPR016193">
    <property type="entry name" value="Cytidine_deaminase-like"/>
</dbReference>
<dbReference type="InterPro" id="IPR011607">
    <property type="entry name" value="MGS-like_dom"/>
</dbReference>
<dbReference type="InterPro" id="IPR036914">
    <property type="entry name" value="MGS-like_dom_sf"/>
</dbReference>
<dbReference type="InterPro" id="IPR002695">
    <property type="entry name" value="PurH-like"/>
</dbReference>
<dbReference type="NCBIfam" id="NF002049">
    <property type="entry name" value="PRK00881.1"/>
    <property type="match status" value="1"/>
</dbReference>
<dbReference type="NCBIfam" id="TIGR00355">
    <property type="entry name" value="purH"/>
    <property type="match status" value="1"/>
</dbReference>
<dbReference type="PANTHER" id="PTHR11692:SF0">
    <property type="entry name" value="BIFUNCTIONAL PURINE BIOSYNTHESIS PROTEIN ATIC"/>
    <property type="match status" value="1"/>
</dbReference>
<dbReference type="PANTHER" id="PTHR11692">
    <property type="entry name" value="BIFUNCTIONAL PURINE BIOSYNTHESIS PROTEIN PURH"/>
    <property type="match status" value="1"/>
</dbReference>
<dbReference type="Pfam" id="PF01808">
    <property type="entry name" value="AICARFT_IMPCHas"/>
    <property type="match status" value="1"/>
</dbReference>
<dbReference type="Pfam" id="PF02142">
    <property type="entry name" value="MGS"/>
    <property type="match status" value="1"/>
</dbReference>
<dbReference type="PIRSF" id="PIRSF000414">
    <property type="entry name" value="AICARFT_IMPCHas"/>
    <property type="match status" value="1"/>
</dbReference>
<dbReference type="SMART" id="SM00798">
    <property type="entry name" value="AICARFT_IMPCHas"/>
    <property type="match status" value="1"/>
</dbReference>
<dbReference type="SMART" id="SM00851">
    <property type="entry name" value="MGS"/>
    <property type="match status" value="1"/>
</dbReference>
<dbReference type="SUPFAM" id="SSF53927">
    <property type="entry name" value="Cytidine deaminase-like"/>
    <property type="match status" value="1"/>
</dbReference>
<dbReference type="SUPFAM" id="SSF52335">
    <property type="entry name" value="Methylglyoxal synthase-like"/>
    <property type="match status" value="1"/>
</dbReference>
<dbReference type="PROSITE" id="PS51855">
    <property type="entry name" value="MGS"/>
    <property type="match status" value="1"/>
</dbReference>